<dbReference type="EC" id="6.1.1.1" evidence="1"/>
<dbReference type="EMBL" id="CP000025">
    <property type="protein sequence ID" value="AAW35726.1"/>
    <property type="molecule type" value="Genomic_DNA"/>
</dbReference>
<dbReference type="RefSeq" id="WP_002874423.1">
    <property type="nucleotide sequence ID" value="NC_003912.7"/>
</dbReference>
<dbReference type="SMR" id="Q5HTJ2"/>
<dbReference type="KEGG" id="cjr:CJE1407"/>
<dbReference type="HOGENOM" id="CLU_024003_5_0_7"/>
<dbReference type="GO" id="GO:0005829">
    <property type="term" value="C:cytosol"/>
    <property type="evidence" value="ECO:0007669"/>
    <property type="project" value="TreeGrafter"/>
</dbReference>
<dbReference type="GO" id="GO:0005524">
    <property type="term" value="F:ATP binding"/>
    <property type="evidence" value="ECO:0007669"/>
    <property type="project" value="UniProtKB-UniRule"/>
</dbReference>
<dbReference type="GO" id="GO:0003723">
    <property type="term" value="F:RNA binding"/>
    <property type="evidence" value="ECO:0007669"/>
    <property type="project" value="UniProtKB-KW"/>
</dbReference>
<dbReference type="GO" id="GO:0004831">
    <property type="term" value="F:tyrosine-tRNA ligase activity"/>
    <property type="evidence" value="ECO:0007669"/>
    <property type="project" value="UniProtKB-UniRule"/>
</dbReference>
<dbReference type="GO" id="GO:0006437">
    <property type="term" value="P:tyrosyl-tRNA aminoacylation"/>
    <property type="evidence" value="ECO:0007669"/>
    <property type="project" value="UniProtKB-UniRule"/>
</dbReference>
<dbReference type="CDD" id="cd00165">
    <property type="entry name" value="S4"/>
    <property type="match status" value="1"/>
</dbReference>
<dbReference type="CDD" id="cd00805">
    <property type="entry name" value="TyrRS_core"/>
    <property type="match status" value="1"/>
</dbReference>
<dbReference type="FunFam" id="1.10.240.10:FF:000006">
    <property type="entry name" value="Tyrosine--tRNA ligase"/>
    <property type="match status" value="1"/>
</dbReference>
<dbReference type="FunFam" id="3.40.50.620:FF:000061">
    <property type="entry name" value="Tyrosine--tRNA ligase"/>
    <property type="match status" value="1"/>
</dbReference>
<dbReference type="Gene3D" id="3.40.50.620">
    <property type="entry name" value="HUPs"/>
    <property type="match status" value="1"/>
</dbReference>
<dbReference type="Gene3D" id="3.10.290.10">
    <property type="entry name" value="RNA-binding S4 domain"/>
    <property type="match status" value="1"/>
</dbReference>
<dbReference type="Gene3D" id="1.10.240.10">
    <property type="entry name" value="Tyrosyl-Transfer RNA Synthetase"/>
    <property type="match status" value="1"/>
</dbReference>
<dbReference type="HAMAP" id="MF_02007">
    <property type="entry name" value="Tyr_tRNA_synth_type2"/>
    <property type="match status" value="1"/>
</dbReference>
<dbReference type="InterPro" id="IPR001412">
    <property type="entry name" value="aa-tRNA-synth_I_CS"/>
</dbReference>
<dbReference type="InterPro" id="IPR002305">
    <property type="entry name" value="aa-tRNA-synth_Ic"/>
</dbReference>
<dbReference type="InterPro" id="IPR014729">
    <property type="entry name" value="Rossmann-like_a/b/a_fold"/>
</dbReference>
<dbReference type="InterPro" id="IPR002942">
    <property type="entry name" value="S4_RNA-bd"/>
</dbReference>
<dbReference type="InterPro" id="IPR036986">
    <property type="entry name" value="S4_RNA-bd_sf"/>
</dbReference>
<dbReference type="InterPro" id="IPR054608">
    <property type="entry name" value="SYY-like_C"/>
</dbReference>
<dbReference type="InterPro" id="IPR002307">
    <property type="entry name" value="Tyr-tRNA-ligase"/>
</dbReference>
<dbReference type="InterPro" id="IPR024088">
    <property type="entry name" value="Tyr-tRNA-ligase_bac-type"/>
</dbReference>
<dbReference type="InterPro" id="IPR024108">
    <property type="entry name" value="Tyr-tRNA-ligase_bac_2"/>
</dbReference>
<dbReference type="NCBIfam" id="TIGR00234">
    <property type="entry name" value="tyrS"/>
    <property type="match status" value="1"/>
</dbReference>
<dbReference type="PANTHER" id="PTHR11766:SF1">
    <property type="entry name" value="TYROSINE--TRNA LIGASE"/>
    <property type="match status" value="1"/>
</dbReference>
<dbReference type="PANTHER" id="PTHR11766">
    <property type="entry name" value="TYROSYL-TRNA SYNTHETASE"/>
    <property type="match status" value="1"/>
</dbReference>
<dbReference type="Pfam" id="PF22421">
    <property type="entry name" value="SYY_C-terminal"/>
    <property type="match status" value="1"/>
</dbReference>
<dbReference type="Pfam" id="PF00579">
    <property type="entry name" value="tRNA-synt_1b"/>
    <property type="match status" value="1"/>
</dbReference>
<dbReference type="PRINTS" id="PR01040">
    <property type="entry name" value="TRNASYNTHTYR"/>
</dbReference>
<dbReference type="SMART" id="SM00363">
    <property type="entry name" value="S4"/>
    <property type="match status" value="1"/>
</dbReference>
<dbReference type="SUPFAM" id="SSF55174">
    <property type="entry name" value="Alpha-L RNA-binding motif"/>
    <property type="match status" value="1"/>
</dbReference>
<dbReference type="SUPFAM" id="SSF52374">
    <property type="entry name" value="Nucleotidylyl transferase"/>
    <property type="match status" value="1"/>
</dbReference>
<dbReference type="PROSITE" id="PS00178">
    <property type="entry name" value="AA_TRNA_LIGASE_I"/>
    <property type="match status" value="1"/>
</dbReference>
<dbReference type="PROSITE" id="PS50889">
    <property type="entry name" value="S4"/>
    <property type="match status" value="1"/>
</dbReference>
<reference key="1">
    <citation type="journal article" date="2005" name="PLoS Biol.">
        <title>Major structural differences and novel potential virulence mechanisms from the genomes of multiple Campylobacter species.</title>
        <authorList>
            <person name="Fouts D.E."/>
            <person name="Mongodin E.F."/>
            <person name="Mandrell R.E."/>
            <person name="Miller W.G."/>
            <person name="Rasko D.A."/>
            <person name="Ravel J."/>
            <person name="Brinkac L.M."/>
            <person name="DeBoy R.T."/>
            <person name="Parker C.T."/>
            <person name="Daugherty S.C."/>
            <person name="Dodson R.J."/>
            <person name="Durkin A.S."/>
            <person name="Madupu R."/>
            <person name="Sullivan S.A."/>
            <person name="Shetty J.U."/>
            <person name="Ayodeji M.A."/>
            <person name="Shvartsbeyn A."/>
            <person name="Schatz M.C."/>
            <person name="Badger J.H."/>
            <person name="Fraser C.M."/>
            <person name="Nelson K.E."/>
        </authorList>
    </citation>
    <scope>NUCLEOTIDE SEQUENCE [LARGE SCALE GENOMIC DNA]</scope>
    <source>
        <strain>RM1221</strain>
    </source>
</reference>
<name>SYY_CAMJR</name>
<comment type="function">
    <text evidence="1">Catalyzes the attachment of tyrosine to tRNA(Tyr) in a two-step reaction: tyrosine is first activated by ATP to form Tyr-AMP and then transferred to the acceptor end of tRNA(Tyr).</text>
</comment>
<comment type="catalytic activity">
    <reaction evidence="1">
        <text>tRNA(Tyr) + L-tyrosine + ATP = L-tyrosyl-tRNA(Tyr) + AMP + diphosphate + H(+)</text>
        <dbReference type="Rhea" id="RHEA:10220"/>
        <dbReference type="Rhea" id="RHEA-COMP:9706"/>
        <dbReference type="Rhea" id="RHEA-COMP:9707"/>
        <dbReference type="ChEBI" id="CHEBI:15378"/>
        <dbReference type="ChEBI" id="CHEBI:30616"/>
        <dbReference type="ChEBI" id="CHEBI:33019"/>
        <dbReference type="ChEBI" id="CHEBI:58315"/>
        <dbReference type="ChEBI" id="CHEBI:78442"/>
        <dbReference type="ChEBI" id="CHEBI:78536"/>
        <dbReference type="ChEBI" id="CHEBI:456215"/>
        <dbReference type="EC" id="6.1.1.1"/>
    </reaction>
</comment>
<comment type="subunit">
    <text evidence="1">Homodimer.</text>
</comment>
<comment type="subcellular location">
    <subcellularLocation>
        <location evidence="1">Cytoplasm</location>
    </subcellularLocation>
</comment>
<comment type="similarity">
    <text evidence="1">Belongs to the class-I aminoacyl-tRNA synthetase family. TyrS type 2 subfamily.</text>
</comment>
<feature type="chain" id="PRO_0000236706" description="Tyrosine--tRNA ligase">
    <location>
        <begin position="1"/>
        <end position="401"/>
    </location>
</feature>
<feature type="domain" description="S4 RNA-binding" evidence="1">
    <location>
        <begin position="339"/>
        <end position="399"/>
    </location>
</feature>
<feature type="short sequence motif" description="'HIGH' region">
    <location>
        <begin position="45"/>
        <end position="54"/>
    </location>
</feature>
<feature type="short sequence motif" description="'KMSKS' region">
    <location>
        <begin position="230"/>
        <end position="234"/>
    </location>
</feature>
<feature type="binding site" evidence="1">
    <location>
        <position position="233"/>
    </location>
    <ligand>
        <name>ATP</name>
        <dbReference type="ChEBI" id="CHEBI:30616"/>
    </ligand>
</feature>
<gene>
    <name evidence="1" type="primary">tyrS</name>
    <name type="ordered locus">CJE1407</name>
</gene>
<organism>
    <name type="scientific">Campylobacter jejuni (strain RM1221)</name>
    <dbReference type="NCBI Taxonomy" id="195099"/>
    <lineage>
        <taxon>Bacteria</taxon>
        <taxon>Pseudomonadati</taxon>
        <taxon>Campylobacterota</taxon>
        <taxon>Epsilonproteobacteria</taxon>
        <taxon>Campylobacterales</taxon>
        <taxon>Campylobacteraceae</taxon>
        <taxon>Campylobacter</taxon>
    </lineage>
</organism>
<proteinExistence type="inferred from homology"/>
<accession>Q5HTJ2</accession>
<protein>
    <recommendedName>
        <fullName evidence="1">Tyrosine--tRNA ligase</fullName>
        <ecNumber evidence="1">6.1.1.1</ecNumber>
    </recommendedName>
    <alternativeName>
        <fullName evidence="1">Tyrosyl-tRNA synthetase</fullName>
        <shortName evidence="1">TyrRS</shortName>
    </alternativeName>
</protein>
<keyword id="KW-0030">Aminoacyl-tRNA synthetase</keyword>
<keyword id="KW-0067">ATP-binding</keyword>
<keyword id="KW-0963">Cytoplasm</keyword>
<keyword id="KW-0436">Ligase</keyword>
<keyword id="KW-0547">Nucleotide-binding</keyword>
<keyword id="KW-0648">Protein biosynthesis</keyword>
<keyword id="KW-0694">RNA-binding</keyword>
<evidence type="ECO:0000255" key="1">
    <source>
        <dbReference type="HAMAP-Rule" id="MF_02007"/>
    </source>
</evidence>
<sequence length="401" mass="45464">MDIKKILAEVKRGCAELIDEERIEKLIKNYYEKGENFFIKAGFDPTAPDLHLGHSVVLTKMAFLQKHGAIVQFLIGDFTGQIGDPSGKSATRKKLDKEQVLINAKTYETQVFKVLDKEKTQIKFNSTWLNELGAAGIVELTSTFSVARMLERDDFTKRFKEQSPISICEFLYPLLQGYDSVALKSDIEMGGTDQKFNLLMGRQLQRVYNIGKEQAVIMMPLLEGLDGVNKMSKSLNNYIGVTEKANDMYAKILSISDELMFRYYELLSQKSLEEIAQIKKDIEQSNLHPKKAKENLALEITERFHSKEEANNAKSEFDRIHSQNALPSDMAEFEIQGKIWLAKALVECGLESSTSAARRSISANAVSVNSQKVSDEQMYLKQGEYILQIGKRKFAKLKVKE</sequence>